<protein>
    <recommendedName>
        <fullName evidence="1">4-hydroxy-tetrahydrodipicolinate reductase</fullName>
        <shortName evidence="1">HTPA reductase</shortName>
        <ecNumber evidence="1">1.17.1.8</ecNumber>
    </recommendedName>
</protein>
<gene>
    <name evidence="1" type="primary">dapB</name>
    <name type="ordered locus">HEAR2657</name>
</gene>
<evidence type="ECO:0000255" key="1">
    <source>
        <dbReference type="HAMAP-Rule" id="MF_00102"/>
    </source>
</evidence>
<evidence type="ECO:0000305" key="2"/>
<dbReference type="EC" id="1.17.1.8" evidence="1"/>
<dbReference type="EMBL" id="CU207211">
    <property type="protein sequence ID" value="CAL62779.1"/>
    <property type="molecule type" value="Genomic_DNA"/>
</dbReference>
<dbReference type="SMR" id="A4G8E2"/>
<dbReference type="STRING" id="204773.HEAR2657"/>
<dbReference type="KEGG" id="har:HEAR2657"/>
<dbReference type="eggNOG" id="COG0289">
    <property type="taxonomic scope" value="Bacteria"/>
</dbReference>
<dbReference type="HOGENOM" id="CLU_047479_2_1_4"/>
<dbReference type="OrthoDB" id="9790352at2"/>
<dbReference type="UniPathway" id="UPA00034">
    <property type="reaction ID" value="UER00018"/>
</dbReference>
<dbReference type="Proteomes" id="UP000006697">
    <property type="component" value="Chromosome"/>
</dbReference>
<dbReference type="GO" id="GO:0005829">
    <property type="term" value="C:cytosol"/>
    <property type="evidence" value="ECO:0007669"/>
    <property type="project" value="TreeGrafter"/>
</dbReference>
<dbReference type="GO" id="GO:0008839">
    <property type="term" value="F:4-hydroxy-tetrahydrodipicolinate reductase"/>
    <property type="evidence" value="ECO:0007669"/>
    <property type="project" value="UniProtKB-EC"/>
</dbReference>
<dbReference type="GO" id="GO:0051287">
    <property type="term" value="F:NAD binding"/>
    <property type="evidence" value="ECO:0007669"/>
    <property type="project" value="UniProtKB-UniRule"/>
</dbReference>
<dbReference type="GO" id="GO:0050661">
    <property type="term" value="F:NADP binding"/>
    <property type="evidence" value="ECO:0007669"/>
    <property type="project" value="UniProtKB-UniRule"/>
</dbReference>
<dbReference type="GO" id="GO:0016726">
    <property type="term" value="F:oxidoreductase activity, acting on CH or CH2 groups, NAD or NADP as acceptor"/>
    <property type="evidence" value="ECO:0007669"/>
    <property type="project" value="UniProtKB-UniRule"/>
</dbReference>
<dbReference type="GO" id="GO:0019877">
    <property type="term" value="P:diaminopimelate biosynthetic process"/>
    <property type="evidence" value="ECO:0007669"/>
    <property type="project" value="UniProtKB-UniRule"/>
</dbReference>
<dbReference type="GO" id="GO:0009089">
    <property type="term" value="P:lysine biosynthetic process via diaminopimelate"/>
    <property type="evidence" value="ECO:0007669"/>
    <property type="project" value="UniProtKB-UniRule"/>
</dbReference>
<dbReference type="CDD" id="cd02274">
    <property type="entry name" value="DHDPR_N"/>
    <property type="match status" value="1"/>
</dbReference>
<dbReference type="FunFam" id="3.30.360.10:FF:000004">
    <property type="entry name" value="4-hydroxy-tetrahydrodipicolinate reductase"/>
    <property type="match status" value="1"/>
</dbReference>
<dbReference type="Gene3D" id="3.30.360.10">
    <property type="entry name" value="Dihydrodipicolinate Reductase, domain 2"/>
    <property type="match status" value="1"/>
</dbReference>
<dbReference type="Gene3D" id="3.40.50.720">
    <property type="entry name" value="NAD(P)-binding Rossmann-like Domain"/>
    <property type="match status" value="1"/>
</dbReference>
<dbReference type="HAMAP" id="MF_00102">
    <property type="entry name" value="DapB"/>
    <property type="match status" value="1"/>
</dbReference>
<dbReference type="InterPro" id="IPR022663">
    <property type="entry name" value="DapB_C"/>
</dbReference>
<dbReference type="InterPro" id="IPR000846">
    <property type="entry name" value="DapB_N"/>
</dbReference>
<dbReference type="InterPro" id="IPR022664">
    <property type="entry name" value="DapB_N_CS"/>
</dbReference>
<dbReference type="InterPro" id="IPR023940">
    <property type="entry name" value="DHDPR_bac"/>
</dbReference>
<dbReference type="InterPro" id="IPR036291">
    <property type="entry name" value="NAD(P)-bd_dom_sf"/>
</dbReference>
<dbReference type="NCBIfam" id="TIGR00036">
    <property type="entry name" value="dapB"/>
    <property type="match status" value="1"/>
</dbReference>
<dbReference type="PANTHER" id="PTHR20836:SF0">
    <property type="entry name" value="4-HYDROXY-TETRAHYDRODIPICOLINATE REDUCTASE 1, CHLOROPLASTIC-RELATED"/>
    <property type="match status" value="1"/>
</dbReference>
<dbReference type="PANTHER" id="PTHR20836">
    <property type="entry name" value="DIHYDRODIPICOLINATE REDUCTASE"/>
    <property type="match status" value="1"/>
</dbReference>
<dbReference type="Pfam" id="PF05173">
    <property type="entry name" value="DapB_C"/>
    <property type="match status" value="1"/>
</dbReference>
<dbReference type="Pfam" id="PF01113">
    <property type="entry name" value="DapB_N"/>
    <property type="match status" value="1"/>
</dbReference>
<dbReference type="PIRSF" id="PIRSF000161">
    <property type="entry name" value="DHPR"/>
    <property type="match status" value="1"/>
</dbReference>
<dbReference type="SUPFAM" id="SSF55347">
    <property type="entry name" value="Glyceraldehyde-3-phosphate dehydrogenase-like, C-terminal domain"/>
    <property type="match status" value="1"/>
</dbReference>
<dbReference type="SUPFAM" id="SSF51735">
    <property type="entry name" value="NAD(P)-binding Rossmann-fold domains"/>
    <property type="match status" value="1"/>
</dbReference>
<dbReference type="PROSITE" id="PS01298">
    <property type="entry name" value="DAPB"/>
    <property type="match status" value="1"/>
</dbReference>
<accession>A4G8E2</accession>
<name>DAPB_HERAR</name>
<keyword id="KW-0028">Amino-acid biosynthesis</keyword>
<keyword id="KW-0963">Cytoplasm</keyword>
<keyword id="KW-0220">Diaminopimelate biosynthesis</keyword>
<keyword id="KW-0457">Lysine biosynthesis</keyword>
<keyword id="KW-0520">NAD</keyword>
<keyword id="KW-0521">NADP</keyword>
<keyword id="KW-0560">Oxidoreductase</keyword>
<keyword id="KW-1185">Reference proteome</keyword>
<sequence>MNQMKIAVAGASGRMGHMLIEAILNAADATLSGALDIATSPAIGTDAAAFLGKPSGVLIESDLAKGLANADFLIDFTRPEGTLKHLEYCAAHGIKMIIGTTGFDVAGKAAIAAAAEKTAIMFAPNMSVGVNVTMKLLEMAAQNFSEGYDIEIIEAHHRNKVDAPSGTAIKMGEVIAGALGKELNDVAVWAREGVTGARDPSSIGFATVRGGDIIGDHTVLFAGDGERIEISHKSSSRVSYAHGSLRAARFLADKKTGLYDMQDVLGLR</sequence>
<proteinExistence type="inferred from homology"/>
<organism>
    <name type="scientific">Herminiimonas arsenicoxydans</name>
    <dbReference type="NCBI Taxonomy" id="204773"/>
    <lineage>
        <taxon>Bacteria</taxon>
        <taxon>Pseudomonadati</taxon>
        <taxon>Pseudomonadota</taxon>
        <taxon>Betaproteobacteria</taxon>
        <taxon>Burkholderiales</taxon>
        <taxon>Oxalobacteraceae</taxon>
        <taxon>Herminiimonas</taxon>
    </lineage>
</organism>
<comment type="function">
    <text evidence="1">Catalyzes the conversion of 4-hydroxy-tetrahydrodipicolinate (HTPA) to tetrahydrodipicolinate.</text>
</comment>
<comment type="catalytic activity">
    <reaction evidence="1">
        <text>(S)-2,3,4,5-tetrahydrodipicolinate + NAD(+) + H2O = (2S,4S)-4-hydroxy-2,3,4,5-tetrahydrodipicolinate + NADH + H(+)</text>
        <dbReference type="Rhea" id="RHEA:35323"/>
        <dbReference type="ChEBI" id="CHEBI:15377"/>
        <dbReference type="ChEBI" id="CHEBI:15378"/>
        <dbReference type="ChEBI" id="CHEBI:16845"/>
        <dbReference type="ChEBI" id="CHEBI:57540"/>
        <dbReference type="ChEBI" id="CHEBI:57945"/>
        <dbReference type="ChEBI" id="CHEBI:67139"/>
        <dbReference type="EC" id="1.17.1.8"/>
    </reaction>
</comment>
<comment type="catalytic activity">
    <reaction evidence="1">
        <text>(S)-2,3,4,5-tetrahydrodipicolinate + NADP(+) + H2O = (2S,4S)-4-hydroxy-2,3,4,5-tetrahydrodipicolinate + NADPH + H(+)</text>
        <dbReference type="Rhea" id="RHEA:35331"/>
        <dbReference type="ChEBI" id="CHEBI:15377"/>
        <dbReference type="ChEBI" id="CHEBI:15378"/>
        <dbReference type="ChEBI" id="CHEBI:16845"/>
        <dbReference type="ChEBI" id="CHEBI:57783"/>
        <dbReference type="ChEBI" id="CHEBI:58349"/>
        <dbReference type="ChEBI" id="CHEBI:67139"/>
        <dbReference type="EC" id="1.17.1.8"/>
    </reaction>
</comment>
<comment type="pathway">
    <text evidence="1">Amino-acid biosynthesis; L-lysine biosynthesis via DAP pathway; (S)-tetrahydrodipicolinate from L-aspartate: step 4/4.</text>
</comment>
<comment type="subcellular location">
    <subcellularLocation>
        <location evidence="1">Cytoplasm</location>
    </subcellularLocation>
</comment>
<comment type="similarity">
    <text evidence="1">Belongs to the DapB family.</text>
</comment>
<comment type="caution">
    <text evidence="2">Was originally thought to be a dihydrodipicolinate reductase (DHDPR), catalyzing the conversion of dihydrodipicolinate to tetrahydrodipicolinate. However, it was shown in E.coli that the substrate of the enzymatic reaction is not dihydrodipicolinate (DHDP) but in fact (2S,4S)-4-hydroxy-2,3,4,5-tetrahydrodipicolinic acid (HTPA), the product released by the DapA-catalyzed reaction.</text>
</comment>
<feature type="chain" id="PRO_1000057686" description="4-hydroxy-tetrahydrodipicolinate reductase">
    <location>
        <begin position="1"/>
        <end position="268"/>
    </location>
</feature>
<feature type="active site" description="Proton donor/acceptor" evidence="1">
    <location>
        <position position="156"/>
    </location>
</feature>
<feature type="active site" description="Proton donor" evidence="1">
    <location>
        <position position="160"/>
    </location>
</feature>
<feature type="binding site" evidence="1">
    <location>
        <begin position="10"/>
        <end position="15"/>
    </location>
    <ligand>
        <name>NAD(+)</name>
        <dbReference type="ChEBI" id="CHEBI:57540"/>
    </ligand>
</feature>
<feature type="binding site" evidence="1">
    <location>
        <position position="36"/>
    </location>
    <ligand>
        <name>NAD(+)</name>
        <dbReference type="ChEBI" id="CHEBI:57540"/>
    </ligand>
</feature>
<feature type="binding site" evidence="1">
    <location>
        <begin position="99"/>
        <end position="101"/>
    </location>
    <ligand>
        <name>NAD(+)</name>
        <dbReference type="ChEBI" id="CHEBI:57540"/>
    </ligand>
</feature>
<feature type="binding site" evidence="1">
    <location>
        <begin position="123"/>
        <end position="126"/>
    </location>
    <ligand>
        <name>NAD(+)</name>
        <dbReference type="ChEBI" id="CHEBI:57540"/>
    </ligand>
</feature>
<feature type="binding site" evidence="1">
    <location>
        <position position="157"/>
    </location>
    <ligand>
        <name>(S)-2,3,4,5-tetrahydrodipicolinate</name>
        <dbReference type="ChEBI" id="CHEBI:16845"/>
    </ligand>
</feature>
<feature type="binding site" evidence="1">
    <location>
        <begin position="166"/>
        <end position="167"/>
    </location>
    <ligand>
        <name>(S)-2,3,4,5-tetrahydrodipicolinate</name>
        <dbReference type="ChEBI" id="CHEBI:16845"/>
    </ligand>
</feature>
<reference key="1">
    <citation type="journal article" date="2007" name="PLoS Genet.">
        <title>A tale of two oxidation states: bacterial colonization of arsenic-rich environments.</title>
        <authorList>
            <person name="Muller D."/>
            <person name="Medigue C."/>
            <person name="Koechler S."/>
            <person name="Barbe V."/>
            <person name="Barakat M."/>
            <person name="Talla E."/>
            <person name="Bonnefoy V."/>
            <person name="Krin E."/>
            <person name="Arsene-Ploetze F."/>
            <person name="Carapito C."/>
            <person name="Chandler M."/>
            <person name="Cournoyer B."/>
            <person name="Cruveiller S."/>
            <person name="Dossat C."/>
            <person name="Duval S."/>
            <person name="Heymann M."/>
            <person name="Leize E."/>
            <person name="Lieutaud A."/>
            <person name="Lievremont D."/>
            <person name="Makita Y."/>
            <person name="Mangenot S."/>
            <person name="Nitschke W."/>
            <person name="Ortet P."/>
            <person name="Perdrial N."/>
            <person name="Schoepp B."/>
            <person name="Siguier P."/>
            <person name="Simeonova D.D."/>
            <person name="Rouy Z."/>
            <person name="Segurens B."/>
            <person name="Turlin E."/>
            <person name="Vallenet D."/>
            <person name="van Dorsselaer A."/>
            <person name="Weiss S."/>
            <person name="Weissenbach J."/>
            <person name="Lett M.-C."/>
            <person name="Danchin A."/>
            <person name="Bertin P.N."/>
        </authorList>
    </citation>
    <scope>NUCLEOTIDE SEQUENCE [LARGE SCALE GENOMIC DNA]</scope>
    <source>
        <strain>ULPAs1</strain>
    </source>
</reference>